<accession>Q8NE22</accession>
<accession>F5H713</accession>
<dbReference type="EC" id="2.1.1.-"/>
<dbReference type="EMBL" id="AC008937">
    <property type="status" value="NOT_ANNOTATED_CDS"/>
    <property type="molecule type" value="Genomic_DNA"/>
</dbReference>
<dbReference type="EMBL" id="BC036528">
    <property type="protein sequence ID" value="AAH36528.1"/>
    <property type="molecule type" value="mRNA"/>
</dbReference>
<dbReference type="CCDS" id="CCDS3972.1">
    <molecule id="Q8NE22-1"/>
</dbReference>
<dbReference type="CCDS" id="CCDS93713.1">
    <molecule id="Q8NE22-2"/>
</dbReference>
<dbReference type="RefSeq" id="NP_001165461.1">
    <molecule id="Q8NE22-2"/>
    <property type="nucleotide sequence ID" value="NM_001171990.3"/>
</dbReference>
<dbReference type="RefSeq" id="NP_714917.2">
    <molecule id="Q8NE22-1"/>
    <property type="nucleotide sequence ID" value="NM_153706.4"/>
</dbReference>
<dbReference type="BioGRID" id="126356">
    <property type="interactions" value="6"/>
</dbReference>
<dbReference type="FunCoup" id="Q8NE22">
    <property type="interactions" value="708"/>
</dbReference>
<dbReference type="IntAct" id="Q8NE22">
    <property type="interactions" value="6"/>
</dbReference>
<dbReference type="STRING" id="9606.ENSP00000285947"/>
<dbReference type="iPTMnet" id="Q8NE22"/>
<dbReference type="PhosphoSitePlus" id="Q8NE22"/>
<dbReference type="BioMuta" id="SETD9"/>
<dbReference type="DMDM" id="296434439"/>
<dbReference type="jPOST" id="Q8NE22"/>
<dbReference type="MassIVE" id="Q8NE22"/>
<dbReference type="PaxDb" id="9606-ENSP00000285947"/>
<dbReference type="PeptideAtlas" id="Q8NE22"/>
<dbReference type="ProteomicsDB" id="73116">
    <molecule id="Q8NE22-1"/>
</dbReference>
<dbReference type="ProteomicsDB" id="73117">
    <molecule id="Q8NE22-2"/>
</dbReference>
<dbReference type="Pumba" id="Q8NE22"/>
<dbReference type="Antibodypedia" id="54936">
    <property type="antibodies" value="105 antibodies from 14 providers"/>
</dbReference>
<dbReference type="DNASU" id="133383"/>
<dbReference type="Ensembl" id="ENST00000285947.5">
    <molecule id="Q8NE22-1"/>
    <property type="protein sequence ID" value="ENSP00000285947.2"/>
    <property type="gene ID" value="ENSG00000155542.12"/>
</dbReference>
<dbReference type="Ensembl" id="ENST00000628593.1">
    <molecule id="Q8NE22-2"/>
    <property type="protein sequence ID" value="ENSP00000486609.1"/>
    <property type="gene ID" value="ENSG00000155542.12"/>
</dbReference>
<dbReference type="GeneID" id="133383"/>
<dbReference type="KEGG" id="hsa:133383"/>
<dbReference type="MANE-Select" id="ENST00000285947.5">
    <property type="protein sequence ID" value="ENSP00000285947.2"/>
    <property type="RefSeq nucleotide sequence ID" value="NM_153706.4"/>
    <property type="RefSeq protein sequence ID" value="NP_714917.2"/>
</dbReference>
<dbReference type="UCSC" id="uc003jqx.4">
    <molecule id="Q8NE22-1"/>
    <property type="organism name" value="human"/>
</dbReference>
<dbReference type="AGR" id="HGNC:28508"/>
<dbReference type="CTD" id="133383"/>
<dbReference type="DisGeNET" id="133383"/>
<dbReference type="GeneCards" id="SETD9"/>
<dbReference type="HGNC" id="HGNC:28508">
    <property type="gene designation" value="SETD9"/>
</dbReference>
<dbReference type="HPA" id="ENSG00000155542">
    <property type="expression patterns" value="Tissue enhanced (testis)"/>
</dbReference>
<dbReference type="neXtProt" id="NX_Q8NE22"/>
<dbReference type="OpenTargets" id="ENSG00000155542"/>
<dbReference type="PharmGKB" id="PA162380099"/>
<dbReference type="VEuPathDB" id="HostDB:ENSG00000155542"/>
<dbReference type="eggNOG" id="ENOG502QVIC">
    <property type="taxonomic scope" value="Eukaryota"/>
</dbReference>
<dbReference type="GeneTree" id="ENSGT00390000001437"/>
<dbReference type="HOGENOM" id="CLU_930547_0_0_1"/>
<dbReference type="InParanoid" id="Q8NE22"/>
<dbReference type="OMA" id="YQPYEPI"/>
<dbReference type="OrthoDB" id="442460at2759"/>
<dbReference type="PAN-GO" id="Q8NE22">
    <property type="GO annotations" value="0 GO annotations based on evolutionary models"/>
</dbReference>
<dbReference type="PhylomeDB" id="Q8NE22"/>
<dbReference type="TreeFam" id="TF314670"/>
<dbReference type="PathwayCommons" id="Q8NE22"/>
<dbReference type="Reactome" id="R-HSA-6804760">
    <property type="pathway name" value="Regulation of TP53 Activity through Methylation"/>
</dbReference>
<dbReference type="SignaLink" id="Q8NE22"/>
<dbReference type="BioGRID-ORCS" id="133383">
    <property type="hits" value="9 hits in 1157 CRISPR screens"/>
</dbReference>
<dbReference type="CD-CODE" id="91857CE7">
    <property type="entry name" value="Nucleolus"/>
</dbReference>
<dbReference type="ChiTaRS" id="SETD9">
    <property type="organism name" value="human"/>
</dbReference>
<dbReference type="GenomeRNAi" id="133383"/>
<dbReference type="Pharos" id="Q8NE22">
    <property type="development level" value="Tdark"/>
</dbReference>
<dbReference type="PRO" id="PR:Q8NE22"/>
<dbReference type="Proteomes" id="UP000005640">
    <property type="component" value="Chromosome 5"/>
</dbReference>
<dbReference type="RNAct" id="Q8NE22">
    <property type="molecule type" value="protein"/>
</dbReference>
<dbReference type="Bgee" id="ENSG00000155542">
    <property type="expression patterns" value="Expressed in sperm and 151 other cell types or tissues"/>
</dbReference>
<dbReference type="ExpressionAtlas" id="Q8NE22">
    <property type="expression patterns" value="baseline and differential"/>
</dbReference>
<dbReference type="GO" id="GO:0005739">
    <property type="term" value="C:mitochondrion"/>
    <property type="evidence" value="ECO:0006056"/>
    <property type="project" value="FlyBase"/>
</dbReference>
<dbReference type="GO" id="GO:0005654">
    <property type="term" value="C:nucleoplasm"/>
    <property type="evidence" value="ECO:0000304"/>
    <property type="project" value="Reactome"/>
</dbReference>
<dbReference type="GO" id="GO:0016278">
    <property type="term" value="F:lysine N-methyltransferase activity"/>
    <property type="evidence" value="ECO:0000304"/>
    <property type="project" value="Reactome"/>
</dbReference>
<dbReference type="GO" id="GO:0032259">
    <property type="term" value="P:methylation"/>
    <property type="evidence" value="ECO:0007669"/>
    <property type="project" value="UniProtKB-KW"/>
</dbReference>
<dbReference type="GO" id="GO:1901796">
    <property type="term" value="P:regulation of signal transduction by p53 class mediator"/>
    <property type="evidence" value="ECO:0000304"/>
    <property type="project" value="Reactome"/>
</dbReference>
<dbReference type="CDD" id="cd10537">
    <property type="entry name" value="SET_SETD9"/>
    <property type="match status" value="1"/>
</dbReference>
<dbReference type="Gene3D" id="2.170.270.10">
    <property type="entry name" value="SET domain"/>
    <property type="match status" value="1"/>
</dbReference>
<dbReference type="InterPro" id="IPR001214">
    <property type="entry name" value="SET_dom"/>
</dbReference>
<dbReference type="InterPro" id="IPR046341">
    <property type="entry name" value="SET_dom_sf"/>
</dbReference>
<dbReference type="InterPro" id="IPR040415">
    <property type="entry name" value="SETD9"/>
</dbReference>
<dbReference type="PANTHER" id="PTHR33524">
    <property type="entry name" value="C5ORF35"/>
    <property type="match status" value="1"/>
</dbReference>
<dbReference type="PANTHER" id="PTHR33524:SF2">
    <property type="entry name" value="SET DOMAIN-CONTAINING PROTEIN 9"/>
    <property type="match status" value="1"/>
</dbReference>
<dbReference type="SUPFAM" id="SSF82199">
    <property type="entry name" value="SET domain"/>
    <property type="match status" value="1"/>
</dbReference>
<dbReference type="PROSITE" id="PS50280">
    <property type="entry name" value="SET"/>
    <property type="match status" value="1"/>
</dbReference>
<protein>
    <recommendedName>
        <fullName>SET domain-containing protein 9</fullName>
        <ecNumber>2.1.1.-</ecNumber>
    </recommendedName>
</protein>
<evidence type="ECO:0000255" key="1">
    <source>
        <dbReference type="PROSITE-ProRule" id="PRU00190"/>
    </source>
</evidence>
<evidence type="ECO:0000269" key="2">
    <source>
    </source>
</evidence>
<evidence type="ECO:0000305" key="3"/>
<organism>
    <name type="scientific">Homo sapiens</name>
    <name type="common">Human</name>
    <dbReference type="NCBI Taxonomy" id="9606"/>
    <lineage>
        <taxon>Eukaryota</taxon>
        <taxon>Metazoa</taxon>
        <taxon>Chordata</taxon>
        <taxon>Craniata</taxon>
        <taxon>Vertebrata</taxon>
        <taxon>Euteleostomi</taxon>
        <taxon>Mammalia</taxon>
        <taxon>Eutheria</taxon>
        <taxon>Euarchontoglires</taxon>
        <taxon>Primates</taxon>
        <taxon>Haplorrhini</taxon>
        <taxon>Catarrhini</taxon>
        <taxon>Hominidae</taxon>
        <taxon>Homo</taxon>
    </lineage>
</organism>
<sequence>MPGRLLRGLWQRWRRYKYRFVPWIALNLSHNPRTLRYVPEESKDKVISDEDVLGTLLKVFQALFLNDFNKQSEILSMLPESVKSKYQDLLAVEHQGVKLLENRHQQQSTFKPEEILYKTLGFSVAQATSSLISAGKGVFVTKGLVPKGAVVSMYPGTVYQKYEPIFFQSIGNPFIFRCLDGVLIDGNDKGISKVVYRSCNGRDRLGPLKMSDSTWLTSEIHNPLAVGQYVNNCSNDRAANVCYQEFDVPAVFPIELKQYLPNIAYSYDKQSPLRCVVLVALRDINQGEELFSNYYTIVS</sequence>
<name>SETD9_HUMAN</name>
<comment type="interaction">
    <interactant intactId="EBI-10698970">
        <id>Q8NE22</id>
    </interactant>
    <interactant intactId="EBI-356164">
        <id>O60763</id>
        <label>USO1</label>
    </interactant>
    <organismsDiffer>false</organismsDiffer>
    <experiments>2</experiments>
</comment>
<comment type="alternative products">
    <event type="alternative splicing"/>
    <isoform>
        <id>Q8NE22-1</id>
        <name>1</name>
        <sequence type="displayed"/>
    </isoform>
    <isoform>
        <id>Q8NE22-2</id>
        <name>2</name>
        <sequence type="described" ref="VSP_043790 VSP_043791"/>
    </isoform>
</comment>
<comment type="similarity">
    <text evidence="1">Belongs to the class V-like SAM-binding methyltransferase superfamily.</text>
</comment>
<feature type="chain" id="PRO_0000300496" description="SET domain-containing protein 9">
    <location>
        <begin position="1"/>
        <end position="299"/>
    </location>
</feature>
<feature type="domain" description="SET" evidence="1">
    <location>
        <begin position="122"/>
        <end position="295"/>
    </location>
</feature>
<feature type="binding site" evidence="1">
    <location>
        <position position="294"/>
    </location>
    <ligand>
        <name>S-adenosyl-L-methionine</name>
        <dbReference type="ChEBI" id="CHEBI:59789"/>
    </ligand>
</feature>
<feature type="splice variant" id="VSP_043790" description="In isoform 2." evidence="3">
    <original>S</original>
    <variation>R</variation>
    <location>
        <position position="271"/>
    </location>
</feature>
<feature type="splice variant" id="VSP_043791" description="In isoform 2." evidence="3">
    <location>
        <begin position="272"/>
        <end position="299"/>
    </location>
</feature>
<feature type="sequence variant" id="VAR_034875" description="In dbSNP:rs2257505." evidence="2">
    <original>S</original>
    <variation>T</variation>
    <location>
        <position position="76"/>
    </location>
</feature>
<feature type="sequence variant" id="VAR_034876" description="In dbSNP:rs40497.">
    <original>K</original>
    <variation>E</variation>
    <location>
        <position position="209"/>
    </location>
</feature>
<feature type="sequence conflict" description="In Ref. 2; AAH36528." evidence="3" ref="2">
    <original>L</original>
    <variation>R</variation>
    <location>
        <position position="100"/>
    </location>
</feature>
<gene>
    <name type="primary">SETD9</name>
    <name type="synonym">C5orf35</name>
</gene>
<keyword id="KW-0025">Alternative splicing</keyword>
<keyword id="KW-0489">Methyltransferase</keyword>
<keyword id="KW-1267">Proteomics identification</keyword>
<keyword id="KW-1185">Reference proteome</keyword>
<keyword id="KW-0949">S-adenosyl-L-methionine</keyword>
<keyword id="KW-0808">Transferase</keyword>
<reference key="1">
    <citation type="journal article" date="2004" name="Nature">
        <title>The DNA sequence and comparative analysis of human chromosome 5.</title>
        <authorList>
            <person name="Schmutz J."/>
            <person name="Martin J."/>
            <person name="Terry A."/>
            <person name="Couronne O."/>
            <person name="Grimwood J."/>
            <person name="Lowry S."/>
            <person name="Gordon L.A."/>
            <person name="Scott D."/>
            <person name="Xie G."/>
            <person name="Huang W."/>
            <person name="Hellsten U."/>
            <person name="Tran-Gyamfi M."/>
            <person name="She X."/>
            <person name="Prabhakar S."/>
            <person name="Aerts A."/>
            <person name="Altherr M."/>
            <person name="Bajorek E."/>
            <person name="Black S."/>
            <person name="Branscomb E."/>
            <person name="Caoile C."/>
            <person name="Challacombe J.F."/>
            <person name="Chan Y.M."/>
            <person name="Denys M."/>
            <person name="Detter J.C."/>
            <person name="Escobar J."/>
            <person name="Flowers D."/>
            <person name="Fotopulos D."/>
            <person name="Glavina T."/>
            <person name="Gomez M."/>
            <person name="Gonzales E."/>
            <person name="Goodstein D."/>
            <person name="Grigoriev I."/>
            <person name="Groza M."/>
            <person name="Hammon N."/>
            <person name="Hawkins T."/>
            <person name="Haydu L."/>
            <person name="Israni S."/>
            <person name="Jett J."/>
            <person name="Kadner K."/>
            <person name="Kimball H."/>
            <person name="Kobayashi A."/>
            <person name="Lopez F."/>
            <person name="Lou Y."/>
            <person name="Martinez D."/>
            <person name="Medina C."/>
            <person name="Morgan J."/>
            <person name="Nandkeshwar R."/>
            <person name="Noonan J.P."/>
            <person name="Pitluck S."/>
            <person name="Pollard M."/>
            <person name="Predki P."/>
            <person name="Priest J."/>
            <person name="Ramirez L."/>
            <person name="Retterer J."/>
            <person name="Rodriguez A."/>
            <person name="Rogers S."/>
            <person name="Salamov A."/>
            <person name="Salazar A."/>
            <person name="Thayer N."/>
            <person name="Tice H."/>
            <person name="Tsai M."/>
            <person name="Ustaszewska A."/>
            <person name="Vo N."/>
            <person name="Wheeler J."/>
            <person name="Wu K."/>
            <person name="Yang J."/>
            <person name="Dickson M."/>
            <person name="Cheng J.-F."/>
            <person name="Eichler E.E."/>
            <person name="Olsen A."/>
            <person name="Pennacchio L.A."/>
            <person name="Rokhsar D.S."/>
            <person name="Richardson P."/>
            <person name="Lucas S.M."/>
            <person name="Myers R.M."/>
            <person name="Rubin E.M."/>
        </authorList>
    </citation>
    <scope>NUCLEOTIDE SEQUENCE [LARGE SCALE GENOMIC DNA]</scope>
</reference>
<reference key="2">
    <citation type="journal article" date="2004" name="Genome Res.">
        <title>The status, quality, and expansion of the NIH full-length cDNA project: the Mammalian Gene Collection (MGC).</title>
        <authorList>
            <consortium name="The MGC Project Team"/>
        </authorList>
    </citation>
    <scope>NUCLEOTIDE SEQUENCE [LARGE SCALE MRNA] (ISOFORM 1)</scope>
    <scope>VARIANT THR-76</scope>
    <source>
        <tissue>Testis</tissue>
    </source>
</reference>
<proteinExistence type="evidence at protein level"/>